<protein>
    <recommendedName>
        <fullName evidence="1">Phosphoribosylformylglycinamidine synthase subunit PurL</fullName>
        <shortName evidence="1">FGAM synthase</shortName>
        <ecNumber evidence="1">6.3.5.3</ecNumber>
    </recommendedName>
    <alternativeName>
        <fullName evidence="1">Formylglycinamide ribonucleotide amidotransferase subunit II</fullName>
        <shortName evidence="1">FGAR amidotransferase II</shortName>
        <shortName evidence="1">FGAR-AT II</shortName>
    </alternativeName>
    <alternativeName>
        <fullName evidence="1">Glutamine amidotransferase PurL</fullName>
    </alternativeName>
    <alternativeName>
        <fullName evidence="1">Phosphoribosylformylglycinamidine synthase subunit II</fullName>
    </alternativeName>
</protein>
<sequence length="761" mass="80206">MTSRVDTVDNAASTPDHPQPFAELGLKDDEYARIREILGRRPTDAELAMYSVMWSEHCSYKSSKVHLRYFGQTTTEEMRSAMLAGIGENAGVVDIGDGWAVTFKVESHNHPSYVEPYQGAATGVGGIVRDIMAMGARPIAVMDQLRFGAADAPDTRRVFDGVVRGIGGYGNSLGLPNIGGETVFDASYAGNPLVNALCAGVLRKEDLHLAFASGAGNKIILFGARTGLDGIGGVSVLASETFGGDEADGASRKKLPSVQVGDPFTEKVLIECCLELYAAHLVVGIQDLGGAGLSCATSELASAGDGGMHIDLDKVPLRATGMTPAEVLSSESQERMCAVVTPENVDAFMAVCRKWDVLATVIGEVTDGDRLRITWHGETVVDVPPRTVAHEGPVYQRPVARPDTQDALIADTAGGLARPASAAELRQTLLDMIGSPHLCSRAFITEQYDRYVRGNTVLAEHADSGVIRVDEQTGRGIALATDASGRYTLLDPYRGAQLALAEAYRNVAASGATPVAVTNCLNFGSPEDPGVMWQFSEAVRGLADGCVTLGIPVTGGNVSFYNQTGTTPILPTPVVGVLGVIDDVNRRIPTGFGTEPGETLILLGDTADEFDGSIWAQVAHDHLGGTPPKVDLAREQLLAQVLTAASRDGLVSAAHDLSEGGLIQAVVESALAGETGCRLLLPEGADPFVALFSESAGRVLVAVPRTEESRFMSMCEARQLPAVRIGVVDQGSDSVEVQGQFSVTLAELREIHEGVLPGLFG</sequence>
<proteinExistence type="inferred from homology"/>
<comment type="function">
    <text evidence="1">Part of the phosphoribosylformylglycinamidine synthase complex involved in the purines biosynthetic pathway. Catalyzes the ATP-dependent conversion of formylglycinamide ribonucleotide (FGAR) and glutamine to yield formylglycinamidine ribonucleotide (FGAM) and glutamate. The FGAM synthase complex is composed of three subunits. PurQ produces an ammonia molecule by converting glutamine to glutamate. PurL transfers the ammonia molecule to FGAR to form FGAM in an ATP-dependent manner. PurS interacts with PurQ and PurL and is thought to assist in the transfer of the ammonia molecule from PurQ to PurL.</text>
</comment>
<comment type="catalytic activity">
    <reaction evidence="1">
        <text>N(2)-formyl-N(1)-(5-phospho-beta-D-ribosyl)glycinamide + L-glutamine + ATP + H2O = 2-formamido-N(1)-(5-O-phospho-beta-D-ribosyl)acetamidine + L-glutamate + ADP + phosphate + H(+)</text>
        <dbReference type="Rhea" id="RHEA:17129"/>
        <dbReference type="ChEBI" id="CHEBI:15377"/>
        <dbReference type="ChEBI" id="CHEBI:15378"/>
        <dbReference type="ChEBI" id="CHEBI:29985"/>
        <dbReference type="ChEBI" id="CHEBI:30616"/>
        <dbReference type="ChEBI" id="CHEBI:43474"/>
        <dbReference type="ChEBI" id="CHEBI:58359"/>
        <dbReference type="ChEBI" id="CHEBI:147286"/>
        <dbReference type="ChEBI" id="CHEBI:147287"/>
        <dbReference type="ChEBI" id="CHEBI:456216"/>
        <dbReference type="EC" id="6.3.5.3"/>
    </reaction>
</comment>
<comment type="pathway">
    <text evidence="1">Purine metabolism; IMP biosynthesis via de novo pathway; 5-amino-1-(5-phospho-D-ribosyl)imidazole from N(2)-formyl-N(1)-(5-phospho-D-ribosyl)glycinamide: step 1/2.</text>
</comment>
<comment type="subunit">
    <text evidence="1">Monomer. Part of the FGAM synthase complex composed of 1 PurL, 1 PurQ and 2 PurS subunits.</text>
</comment>
<comment type="subcellular location">
    <subcellularLocation>
        <location evidence="1">Cytoplasm</location>
    </subcellularLocation>
</comment>
<comment type="similarity">
    <text evidence="1">Belongs to the FGAMS family.</text>
</comment>
<evidence type="ECO:0000255" key="1">
    <source>
        <dbReference type="HAMAP-Rule" id="MF_00420"/>
    </source>
</evidence>
<evidence type="ECO:0000256" key="2">
    <source>
        <dbReference type="SAM" id="MobiDB-lite"/>
    </source>
</evidence>
<keyword id="KW-0067">ATP-binding</keyword>
<keyword id="KW-0963">Cytoplasm</keyword>
<keyword id="KW-0436">Ligase</keyword>
<keyword id="KW-0460">Magnesium</keyword>
<keyword id="KW-0479">Metal-binding</keyword>
<keyword id="KW-0547">Nucleotide-binding</keyword>
<keyword id="KW-0658">Purine biosynthesis</keyword>
<keyword id="KW-1185">Reference proteome</keyword>
<feature type="chain" id="PRO_1000194830" description="Phosphoribosylformylglycinamidine synthase subunit PurL">
    <location>
        <begin position="1"/>
        <end position="761"/>
    </location>
</feature>
<feature type="region of interest" description="Disordered" evidence="2">
    <location>
        <begin position="1"/>
        <end position="23"/>
    </location>
</feature>
<feature type="compositionally biased region" description="Polar residues" evidence="2">
    <location>
        <begin position="1"/>
        <end position="13"/>
    </location>
</feature>
<feature type="active site" evidence="1">
    <location>
        <position position="57"/>
    </location>
</feature>
<feature type="active site" description="Proton acceptor" evidence="1">
    <location>
        <position position="108"/>
    </location>
</feature>
<feature type="binding site" evidence="1">
    <location>
        <position position="60"/>
    </location>
    <ligand>
        <name>ATP</name>
        <dbReference type="ChEBI" id="CHEBI:30616"/>
    </ligand>
</feature>
<feature type="binding site" evidence="1">
    <location>
        <position position="104"/>
    </location>
    <ligand>
        <name>ATP</name>
        <dbReference type="ChEBI" id="CHEBI:30616"/>
    </ligand>
</feature>
<feature type="binding site" evidence="1">
    <location>
        <position position="106"/>
    </location>
    <ligand>
        <name>Mg(2+)</name>
        <dbReference type="ChEBI" id="CHEBI:18420"/>
        <label>1</label>
    </ligand>
</feature>
<feature type="binding site" evidence="1">
    <location>
        <begin position="107"/>
        <end position="110"/>
    </location>
    <ligand>
        <name>substrate</name>
    </ligand>
</feature>
<feature type="binding site" evidence="1">
    <location>
        <position position="129"/>
    </location>
    <ligand>
        <name>substrate</name>
    </ligand>
</feature>
<feature type="binding site" evidence="1">
    <location>
        <position position="130"/>
    </location>
    <ligand>
        <name>Mg(2+)</name>
        <dbReference type="ChEBI" id="CHEBI:18420"/>
        <label>2</label>
    </ligand>
</feature>
<feature type="binding site" evidence="1">
    <location>
        <position position="259"/>
    </location>
    <ligand>
        <name>substrate</name>
    </ligand>
</feature>
<feature type="binding site" evidence="1">
    <location>
        <position position="287"/>
    </location>
    <ligand>
        <name>Mg(2+)</name>
        <dbReference type="ChEBI" id="CHEBI:18420"/>
        <label>2</label>
    </ligand>
</feature>
<feature type="binding site" evidence="1">
    <location>
        <begin position="331"/>
        <end position="333"/>
    </location>
    <ligand>
        <name>substrate</name>
    </ligand>
</feature>
<feature type="binding site" evidence="1">
    <location>
        <position position="519"/>
    </location>
    <ligand>
        <name>ATP</name>
        <dbReference type="ChEBI" id="CHEBI:30616"/>
    </ligand>
</feature>
<feature type="binding site" evidence="1">
    <location>
        <position position="556"/>
    </location>
    <ligand>
        <name>ATP</name>
        <dbReference type="ChEBI" id="CHEBI:30616"/>
    </ligand>
</feature>
<feature type="binding site" evidence="1">
    <location>
        <position position="557"/>
    </location>
    <ligand>
        <name>Mg(2+)</name>
        <dbReference type="ChEBI" id="CHEBI:18420"/>
        <label>1</label>
    </ligand>
</feature>
<feature type="binding site" evidence="1">
    <location>
        <position position="559"/>
    </location>
    <ligand>
        <name>substrate</name>
    </ligand>
</feature>
<reference key="1">
    <citation type="journal article" date="2009" name="PLoS ONE">
        <title>Non mycobacterial virulence genes in the genome of the emerging pathogen Mycobacterium abscessus.</title>
        <authorList>
            <person name="Ripoll F."/>
            <person name="Pasek S."/>
            <person name="Schenowitz C."/>
            <person name="Dossat C."/>
            <person name="Barbe V."/>
            <person name="Rottman M."/>
            <person name="Macheras E."/>
            <person name="Heym B."/>
            <person name="Herrmann J.L."/>
            <person name="Daffe M."/>
            <person name="Brosch R."/>
            <person name="Risler J.L."/>
            <person name="Gaillard J.L."/>
        </authorList>
    </citation>
    <scope>NUCLEOTIDE SEQUENCE [LARGE SCALE GENOMIC DNA]</scope>
    <source>
        <strain>ATCC 19977 / DSM 44196 / CCUG 20993 / CIP 104536 / JCM 13569 / NCTC 13031 / TMC 1543 / L948</strain>
    </source>
</reference>
<dbReference type="EC" id="6.3.5.3" evidence="1"/>
<dbReference type="EMBL" id="CU458896">
    <property type="protein sequence ID" value="CAM60803.1"/>
    <property type="molecule type" value="Genomic_DNA"/>
</dbReference>
<dbReference type="RefSeq" id="WP_005064180.1">
    <property type="nucleotide sequence ID" value="NZ_MLCG01000008.1"/>
</dbReference>
<dbReference type="SMR" id="B1MHY1"/>
<dbReference type="GeneID" id="93377652"/>
<dbReference type="KEGG" id="mab:MAB_0707"/>
<dbReference type="UniPathway" id="UPA00074">
    <property type="reaction ID" value="UER00128"/>
</dbReference>
<dbReference type="Proteomes" id="UP000007137">
    <property type="component" value="Chromosome"/>
</dbReference>
<dbReference type="GO" id="GO:0005737">
    <property type="term" value="C:cytoplasm"/>
    <property type="evidence" value="ECO:0007669"/>
    <property type="project" value="UniProtKB-SubCell"/>
</dbReference>
<dbReference type="GO" id="GO:0005524">
    <property type="term" value="F:ATP binding"/>
    <property type="evidence" value="ECO:0007669"/>
    <property type="project" value="UniProtKB-UniRule"/>
</dbReference>
<dbReference type="GO" id="GO:0000287">
    <property type="term" value="F:magnesium ion binding"/>
    <property type="evidence" value="ECO:0007669"/>
    <property type="project" value="UniProtKB-UniRule"/>
</dbReference>
<dbReference type="GO" id="GO:0004642">
    <property type="term" value="F:phosphoribosylformylglycinamidine synthase activity"/>
    <property type="evidence" value="ECO:0007669"/>
    <property type="project" value="UniProtKB-UniRule"/>
</dbReference>
<dbReference type="GO" id="GO:0006189">
    <property type="term" value="P:'de novo' IMP biosynthetic process"/>
    <property type="evidence" value="ECO:0007669"/>
    <property type="project" value="UniProtKB-UniRule"/>
</dbReference>
<dbReference type="CDD" id="cd02203">
    <property type="entry name" value="PurL_repeat1"/>
    <property type="match status" value="1"/>
</dbReference>
<dbReference type="CDD" id="cd02204">
    <property type="entry name" value="PurL_repeat2"/>
    <property type="match status" value="1"/>
</dbReference>
<dbReference type="FunFam" id="3.30.1330.10:FF:000004">
    <property type="entry name" value="Phosphoribosylformylglycinamidine synthase subunit PurL"/>
    <property type="match status" value="1"/>
</dbReference>
<dbReference type="FunFam" id="3.90.650.10:FF:000009">
    <property type="entry name" value="Phosphoribosylformylglycinamidine synthase subunit PurL"/>
    <property type="match status" value="1"/>
</dbReference>
<dbReference type="Gene3D" id="3.90.650.10">
    <property type="entry name" value="PurM-like C-terminal domain"/>
    <property type="match status" value="2"/>
</dbReference>
<dbReference type="Gene3D" id="3.30.1330.10">
    <property type="entry name" value="PurM-like, N-terminal domain"/>
    <property type="match status" value="2"/>
</dbReference>
<dbReference type="HAMAP" id="MF_00420">
    <property type="entry name" value="PurL_2"/>
    <property type="match status" value="1"/>
</dbReference>
<dbReference type="InterPro" id="IPR010074">
    <property type="entry name" value="PRibForGlyAmidine_synth_PurL"/>
</dbReference>
<dbReference type="InterPro" id="IPR041609">
    <property type="entry name" value="PurL_linker"/>
</dbReference>
<dbReference type="InterPro" id="IPR010918">
    <property type="entry name" value="PurM-like_C_dom"/>
</dbReference>
<dbReference type="InterPro" id="IPR036676">
    <property type="entry name" value="PurM-like_C_sf"/>
</dbReference>
<dbReference type="InterPro" id="IPR016188">
    <property type="entry name" value="PurM-like_N"/>
</dbReference>
<dbReference type="InterPro" id="IPR036921">
    <property type="entry name" value="PurM-like_N_sf"/>
</dbReference>
<dbReference type="NCBIfam" id="TIGR01736">
    <property type="entry name" value="FGAM_synth_II"/>
    <property type="match status" value="1"/>
</dbReference>
<dbReference type="NCBIfam" id="NF002290">
    <property type="entry name" value="PRK01213.1"/>
    <property type="match status" value="1"/>
</dbReference>
<dbReference type="PANTHER" id="PTHR43555">
    <property type="entry name" value="PHOSPHORIBOSYLFORMYLGLYCINAMIDINE SYNTHASE SUBUNIT PURL"/>
    <property type="match status" value="1"/>
</dbReference>
<dbReference type="PANTHER" id="PTHR43555:SF1">
    <property type="entry name" value="PHOSPHORIBOSYLFORMYLGLYCINAMIDINE SYNTHASE SUBUNIT PURL"/>
    <property type="match status" value="1"/>
</dbReference>
<dbReference type="Pfam" id="PF00586">
    <property type="entry name" value="AIRS"/>
    <property type="match status" value="2"/>
</dbReference>
<dbReference type="Pfam" id="PF02769">
    <property type="entry name" value="AIRS_C"/>
    <property type="match status" value="2"/>
</dbReference>
<dbReference type="Pfam" id="PF18072">
    <property type="entry name" value="FGAR-AT_linker"/>
    <property type="match status" value="1"/>
</dbReference>
<dbReference type="PIRSF" id="PIRSF001587">
    <property type="entry name" value="FGAM_synthase_II"/>
    <property type="match status" value="1"/>
</dbReference>
<dbReference type="SUPFAM" id="SSF56042">
    <property type="entry name" value="PurM C-terminal domain-like"/>
    <property type="match status" value="2"/>
</dbReference>
<dbReference type="SUPFAM" id="SSF55326">
    <property type="entry name" value="PurM N-terminal domain-like"/>
    <property type="match status" value="2"/>
</dbReference>
<accession>B1MHY1</accession>
<gene>
    <name evidence="1" type="primary">purL</name>
    <name type="ordered locus">MAB_0707</name>
</gene>
<name>PURL_MYCA9</name>
<organism>
    <name type="scientific">Mycobacteroides abscessus (strain ATCC 19977 / DSM 44196 / CCUG 20993 / CIP 104536 / JCM 13569 / NCTC 13031 / TMC 1543 / L948)</name>
    <name type="common">Mycobacterium abscessus</name>
    <dbReference type="NCBI Taxonomy" id="561007"/>
    <lineage>
        <taxon>Bacteria</taxon>
        <taxon>Bacillati</taxon>
        <taxon>Actinomycetota</taxon>
        <taxon>Actinomycetes</taxon>
        <taxon>Mycobacteriales</taxon>
        <taxon>Mycobacteriaceae</taxon>
        <taxon>Mycobacteroides</taxon>
        <taxon>Mycobacteroides abscessus</taxon>
    </lineage>
</organism>